<proteinExistence type="inferred from homology"/>
<evidence type="ECO:0000255" key="1">
    <source>
        <dbReference type="HAMAP-Rule" id="MF_00085"/>
    </source>
</evidence>
<accession>B1Y9U5</accession>
<name>IF5A_PYRNV</name>
<sequence length="132" mass="14597">MSTKYVEAGELKEGSYVVIDGEPCRVVEIEKSKTGKHGSAKARIVAVGVFDGGKRTLSLPVDAQVEVPIIEKFTAQVLSISGDIIQLMDMRDYKTIEVPMSYVEEEAKGRLAPGAEVEVWQILDRFKIVRVK</sequence>
<protein>
    <recommendedName>
        <fullName evidence="1">Translation initiation factor 5A</fullName>
    </recommendedName>
    <alternativeName>
        <fullName evidence="1">Hypusine-containing protein</fullName>
    </alternativeName>
    <alternativeName>
        <fullName evidence="1">eIF-5A</fullName>
    </alternativeName>
</protein>
<organism>
    <name type="scientific">Pyrobaculum neutrophilum (strain DSM 2338 / JCM 9278 / NBRC 100436 / V24Sta)</name>
    <name type="common">Thermoproteus neutrophilus</name>
    <dbReference type="NCBI Taxonomy" id="444157"/>
    <lineage>
        <taxon>Archaea</taxon>
        <taxon>Thermoproteota</taxon>
        <taxon>Thermoprotei</taxon>
        <taxon>Thermoproteales</taxon>
        <taxon>Thermoproteaceae</taxon>
        <taxon>Pyrobaculum</taxon>
    </lineage>
</organism>
<gene>
    <name type="primary">eIF5A</name>
    <name type="ordered locus">Tneu_1571</name>
</gene>
<dbReference type="EMBL" id="CP001014">
    <property type="protein sequence ID" value="ACB40495.1"/>
    <property type="molecule type" value="Genomic_DNA"/>
</dbReference>
<dbReference type="RefSeq" id="WP_012350914.1">
    <property type="nucleotide sequence ID" value="NC_010525.1"/>
</dbReference>
<dbReference type="SMR" id="B1Y9U5"/>
<dbReference type="STRING" id="444157.Tneu_1571"/>
<dbReference type="GeneID" id="6166239"/>
<dbReference type="KEGG" id="tne:Tneu_1571"/>
<dbReference type="eggNOG" id="arCOG04277">
    <property type="taxonomic scope" value="Archaea"/>
</dbReference>
<dbReference type="HOGENOM" id="CLU_102600_3_0_2"/>
<dbReference type="OrthoDB" id="23689at2157"/>
<dbReference type="Proteomes" id="UP000001694">
    <property type="component" value="Chromosome"/>
</dbReference>
<dbReference type="GO" id="GO:0005737">
    <property type="term" value="C:cytoplasm"/>
    <property type="evidence" value="ECO:0007669"/>
    <property type="project" value="UniProtKB-SubCell"/>
</dbReference>
<dbReference type="GO" id="GO:0043022">
    <property type="term" value="F:ribosome binding"/>
    <property type="evidence" value="ECO:0007669"/>
    <property type="project" value="InterPro"/>
</dbReference>
<dbReference type="GO" id="GO:0003723">
    <property type="term" value="F:RNA binding"/>
    <property type="evidence" value="ECO:0007669"/>
    <property type="project" value="InterPro"/>
</dbReference>
<dbReference type="GO" id="GO:0003746">
    <property type="term" value="F:translation elongation factor activity"/>
    <property type="evidence" value="ECO:0007669"/>
    <property type="project" value="InterPro"/>
</dbReference>
<dbReference type="GO" id="GO:0003743">
    <property type="term" value="F:translation initiation factor activity"/>
    <property type="evidence" value="ECO:0007669"/>
    <property type="project" value="UniProtKB-UniRule"/>
</dbReference>
<dbReference type="GO" id="GO:0045901">
    <property type="term" value="P:positive regulation of translational elongation"/>
    <property type="evidence" value="ECO:0007669"/>
    <property type="project" value="InterPro"/>
</dbReference>
<dbReference type="GO" id="GO:0045905">
    <property type="term" value="P:positive regulation of translational termination"/>
    <property type="evidence" value="ECO:0007669"/>
    <property type="project" value="InterPro"/>
</dbReference>
<dbReference type="CDD" id="cd04467">
    <property type="entry name" value="S1_aIF5A"/>
    <property type="match status" value="1"/>
</dbReference>
<dbReference type="FunFam" id="2.30.30.30:FF:000038">
    <property type="entry name" value="Translation initiation factor 5A"/>
    <property type="match status" value="1"/>
</dbReference>
<dbReference type="Gene3D" id="2.30.30.30">
    <property type="match status" value="1"/>
</dbReference>
<dbReference type="Gene3D" id="2.40.50.140">
    <property type="entry name" value="Nucleic acid-binding proteins"/>
    <property type="match status" value="1"/>
</dbReference>
<dbReference type="HAMAP" id="MF_00085">
    <property type="entry name" value="eIF_5A"/>
    <property type="match status" value="1"/>
</dbReference>
<dbReference type="InterPro" id="IPR001884">
    <property type="entry name" value="IF5A-like"/>
</dbReference>
<dbReference type="InterPro" id="IPR048670">
    <property type="entry name" value="IF5A-like_N"/>
</dbReference>
<dbReference type="InterPro" id="IPR012340">
    <property type="entry name" value="NA-bd_OB-fold"/>
</dbReference>
<dbReference type="InterPro" id="IPR014722">
    <property type="entry name" value="Rib_uL2_dom2"/>
</dbReference>
<dbReference type="InterPro" id="IPR019769">
    <property type="entry name" value="Trans_elong_IF5A_hypusine_site"/>
</dbReference>
<dbReference type="InterPro" id="IPR022847">
    <property type="entry name" value="Transl_elong_IF5A_arc"/>
</dbReference>
<dbReference type="InterPro" id="IPR020189">
    <property type="entry name" value="Transl_elong_IF5A_C"/>
</dbReference>
<dbReference type="InterPro" id="IPR008991">
    <property type="entry name" value="Translation_prot_SH3-like_sf"/>
</dbReference>
<dbReference type="NCBIfam" id="TIGR00037">
    <property type="entry name" value="eIF_5A"/>
    <property type="match status" value="1"/>
</dbReference>
<dbReference type="NCBIfam" id="NF003076">
    <property type="entry name" value="PRK03999.1"/>
    <property type="match status" value="1"/>
</dbReference>
<dbReference type="PANTHER" id="PTHR11673">
    <property type="entry name" value="TRANSLATION INITIATION FACTOR 5A FAMILY MEMBER"/>
    <property type="match status" value="1"/>
</dbReference>
<dbReference type="Pfam" id="PF01287">
    <property type="entry name" value="eIF-5a"/>
    <property type="match status" value="1"/>
</dbReference>
<dbReference type="Pfam" id="PF21485">
    <property type="entry name" value="IF5A-like_N"/>
    <property type="match status" value="1"/>
</dbReference>
<dbReference type="PIRSF" id="PIRSF003025">
    <property type="entry name" value="eIF5A"/>
    <property type="match status" value="1"/>
</dbReference>
<dbReference type="SMART" id="SM01376">
    <property type="entry name" value="eIF-5a"/>
    <property type="match status" value="1"/>
</dbReference>
<dbReference type="SUPFAM" id="SSF50249">
    <property type="entry name" value="Nucleic acid-binding proteins"/>
    <property type="match status" value="1"/>
</dbReference>
<dbReference type="SUPFAM" id="SSF50104">
    <property type="entry name" value="Translation proteins SH3-like domain"/>
    <property type="match status" value="1"/>
</dbReference>
<dbReference type="PROSITE" id="PS00302">
    <property type="entry name" value="IF5A_HYPUSINE"/>
    <property type="match status" value="1"/>
</dbReference>
<comment type="function">
    <text evidence="1">Functions by promoting the formation of the first peptide bond.</text>
</comment>
<comment type="subcellular location">
    <subcellularLocation>
        <location evidence="1">Cytoplasm</location>
    </subcellularLocation>
</comment>
<comment type="similarity">
    <text evidence="1">Belongs to the eIF-5A family.</text>
</comment>
<keyword id="KW-0963">Cytoplasm</keyword>
<keyword id="KW-0385">Hypusine</keyword>
<keyword id="KW-0396">Initiation factor</keyword>
<keyword id="KW-0648">Protein biosynthesis</keyword>
<reference key="1">
    <citation type="submission" date="2008-03" db="EMBL/GenBank/DDBJ databases">
        <title>Complete sequence of Thermoproteus neutrophilus V24Sta.</title>
        <authorList>
            <consortium name="US DOE Joint Genome Institute"/>
            <person name="Copeland A."/>
            <person name="Lucas S."/>
            <person name="Lapidus A."/>
            <person name="Glavina del Rio T."/>
            <person name="Dalin E."/>
            <person name="Tice H."/>
            <person name="Bruce D."/>
            <person name="Goodwin L."/>
            <person name="Pitluck S."/>
            <person name="Sims D."/>
            <person name="Brettin T."/>
            <person name="Detter J.C."/>
            <person name="Han C."/>
            <person name="Kuske C.R."/>
            <person name="Schmutz J."/>
            <person name="Larimer F."/>
            <person name="Land M."/>
            <person name="Hauser L."/>
            <person name="Kyrpides N."/>
            <person name="Mikhailova N."/>
            <person name="Biddle J.F."/>
            <person name="Zhang Z."/>
            <person name="Fitz-Gibbon S.T."/>
            <person name="Lowe T.M."/>
            <person name="Saltikov C."/>
            <person name="House C.H."/>
            <person name="Richardson P."/>
        </authorList>
    </citation>
    <scope>NUCLEOTIDE SEQUENCE [LARGE SCALE GENOMIC DNA]</scope>
    <source>
        <strain>DSM 2338 / JCM 9278 / NBRC 100436 / V24Sta</strain>
    </source>
</reference>
<feature type="chain" id="PRO_1000093010" description="Translation initiation factor 5A">
    <location>
        <begin position="1"/>
        <end position="132"/>
    </location>
</feature>
<feature type="modified residue" description="Hypusine" evidence="1">
    <location>
        <position position="36"/>
    </location>
</feature>